<name>ATG9A_BOVIN</name>
<feature type="initiator methionine" description="Removed" evidence="2">
    <location>
        <position position="1"/>
    </location>
</feature>
<feature type="chain" id="PRO_0000231035" description="Autophagy-related protein 9A">
    <location>
        <begin position="2"/>
        <end position="839"/>
    </location>
</feature>
<feature type="topological domain" description="Cytoplasmic" evidence="6">
    <location>
        <begin position="2"/>
        <end position="61"/>
    </location>
</feature>
<feature type="transmembrane region" description="Helical" evidence="2">
    <location>
        <begin position="62"/>
        <end position="84"/>
    </location>
</feature>
<feature type="topological domain" description="Lumenal" evidence="6">
    <location>
        <begin position="85"/>
        <end position="128"/>
    </location>
</feature>
<feature type="transmembrane region" description="Helical" evidence="2">
    <location>
        <begin position="129"/>
        <end position="154"/>
    </location>
</feature>
<feature type="topological domain" description="Cytoplasmic" evidence="6">
    <location>
        <begin position="155"/>
        <end position="290"/>
    </location>
</feature>
<feature type="intramembrane region" evidence="2">
    <location>
        <begin position="291"/>
        <end position="301"/>
    </location>
</feature>
<feature type="topological domain" description="Cytoplasmic" evidence="6">
    <location>
        <begin position="302"/>
        <end position="319"/>
    </location>
</feature>
<feature type="intramembrane region" evidence="2">
    <location>
        <begin position="320"/>
        <end position="328"/>
    </location>
</feature>
<feature type="topological domain" description="Cytoplasmic" evidence="6">
    <location>
        <begin position="329"/>
        <end position="371"/>
    </location>
</feature>
<feature type="transmembrane region" description="Helical" evidence="2">
    <location>
        <begin position="372"/>
        <end position="397"/>
    </location>
</feature>
<feature type="topological domain" description="Lumenal" evidence="6">
    <location>
        <begin position="398"/>
        <end position="406"/>
    </location>
</feature>
<feature type="transmembrane region" description="Helical" evidence="2">
    <location>
        <begin position="407"/>
        <end position="424"/>
    </location>
</feature>
<feature type="topological domain" description="Cytoplasmic" evidence="6">
    <location>
        <begin position="425"/>
        <end position="470"/>
    </location>
</feature>
<feature type="intramembrane region" evidence="2">
    <location>
        <begin position="471"/>
        <end position="480"/>
    </location>
</feature>
<feature type="topological domain" description="Cytoplasmic" evidence="6">
    <location>
        <begin position="481"/>
        <end position="483"/>
    </location>
</feature>
<feature type="intramembrane region" evidence="2">
    <location>
        <begin position="484"/>
        <end position="492"/>
    </location>
</feature>
<feature type="topological domain" description="Cytoplasmic" evidence="6">
    <location>
        <begin position="493"/>
        <end position="839"/>
    </location>
</feature>
<feature type="region of interest" description="Disordered" evidence="4">
    <location>
        <begin position="1"/>
        <end position="21"/>
    </location>
</feature>
<feature type="region of interest" description="Disordered" evidence="4">
    <location>
        <begin position="656"/>
        <end position="688"/>
    </location>
</feature>
<feature type="region of interest" description="Disordered" evidence="4">
    <location>
        <begin position="719"/>
        <end position="839"/>
    </location>
</feature>
<feature type="short sequence motif" description="Tyrosine-based sorting signal" evidence="2">
    <location>
        <begin position="8"/>
        <end position="11"/>
    </location>
</feature>
<feature type="compositionally biased region" description="Basic and acidic residues" evidence="4">
    <location>
        <begin position="724"/>
        <end position="736"/>
    </location>
</feature>
<feature type="compositionally biased region" description="Acidic residues" evidence="4">
    <location>
        <begin position="737"/>
        <end position="747"/>
    </location>
</feature>
<feature type="compositionally biased region" description="Acidic residues" evidence="4">
    <location>
        <begin position="823"/>
        <end position="832"/>
    </location>
</feature>
<feature type="modified residue" description="N-acetylalanine" evidence="2">
    <location>
        <position position="2"/>
    </location>
</feature>
<feature type="modified residue" description="Phosphoserine" evidence="2">
    <location>
        <position position="14"/>
    </location>
</feature>
<feature type="modified residue" description="Phosphoserine" evidence="1">
    <location>
        <position position="16"/>
    </location>
</feature>
<feature type="modified residue" description="Phosphoserine" evidence="2">
    <location>
        <position position="18"/>
    </location>
</feature>
<feature type="modified residue" description="Phosphoserine" evidence="2">
    <location>
        <position position="656"/>
    </location>
</feature>
<feature type="modified residue" description="Phosphoserine" evidence="2">
    <location>
        <position position="735"/>
    </location>
</feature>
<feature type="modified residue" description="Phosphoserine" evidence="2">
    <location>
        <position position="738"/>
    </location>
</feature>
<feature type="modified residue" description="Phosphoserine" evidence="2">
    <location>
        <position position="741"/>
    </location>
</feature>
<feature type="modified residue" description="Phosphoserine" evidence="2">
    <location>
        <position position="828"/>
    </location>
</feature>
<feature type="glycosylation site" description="N-linked (GlcNAc...) asparagine" evidence="3">
    <location>
        <position position="99"/>
    </location>
</feature>
<evidence type="ECO:0000250" key="1">
    <source>
        <dbReference type="UniProtKB" id="Q68FE2"/>
    </source>
</evidence>
<evidence type="ECO:0000250" key="2">
    <source>
        <dbReference type="UniProtKB" id="Q7Z3C6"/>
    </source>
</evidence>
<evidence type="ECO:0000255" key="3"/>
<evidence type="ECO:0000256" key="4">
    <source>
        <dbReference type="SAM" id="MobiDB-lite"/>
    </source>
</evidence>
<evidence type="ECO:0000303" key="5">
    <source ref="1"/>
</evidence>
<evidence type="ECO:0000305" key="6"/>
<comment type="function">
    <text evidence="1 2">Phospholipid scramblase involved in autophagy by mediating autophagosomal membrane expansion. Cycles between the preautophagosomal structure/phagophore assembly site (PAS) and the cytoplasmic vesicle pool and supplies membrane for the growing autophagosome. Lipid scramblase activity plays a key role in preautophagosomal structure/phagophore assembly by distributing the phospholipids that arrive through ATG2 (ATG2A or ATG2B) from the cytoplasmic to the luminal leaflet of the bilayer, thereby driving autophagosomal membrane expansion. Also required to supply phosphatidylinositol 4-phosphate to the autophagosome initiation site by recruiting the phosphatidylinositol 4-kinase beta (PI4KB) in a process dependent on ARFIP2, but not ARFIP1 (By similarity). In addition to autophagy, also plays a role in necrotic cell death (By similarity).</text>
</comment>
<comment type="catalytic activity">
    <reaction evidence="2">
        <text>a 1,2-diacyl-sn-glycero-3-phosphocholine(in) = a 1,2-diacyl-sn-glycero-3-phosphocholine(out)</text>
        <dbReference type="Rhea" id="RHEA:38571"/>
        <dbReference type="ChEBI" id="CHEBI:57643"/>
    </reaction>
</comment>
<comment type="catalytic activity">
    <reaction evidence="2">
        <text>a 1,2-diacyl-sn-glycero-3-phospho-L-serine(in) = a 1,2-diacyl-sn-glycero-3-phospho-L-serine(out)</text>
        <dbReference type="Rhea" id="RHEA:38663"/>
        <dbReference type="ChEBI" id="CHEBI:57262"/>
    </reaction>
</comment>
<comment type="catalytic activity">
    <reaction evidence="2">
        <text>a 1,2-diacyl-sn-glycero-3-phosphoethanolamine(in) = a 1,2-diacyl-sn-glycero-3-phosphoethanolamine(out)</text>
        <dbReference type="Rhea" id="RHEA:38895"/>
        <dbReference type="ChEBI" id="CHEBI:64612"/>
    </reaction>
</comment>
<comment type="subunit">
    <text evidence="2">Homotrimer; forms a homotrimer with a central pore that forms a path between the two membrane leaflets. Interacts (via cytoplasmic its C-terminus) with ATG2A. Interacts with SUPT20H. Interacts (via the tyrosine-based sorting signal motif) with AP4M1; promoting association with the AP-4 complex. Interacts with ARFIP1 and ARFIP2. Interacts with PI4K2A and PI4KB. Interacts with ATG4A; the interaction is direct and promotes ATG9A trafficking.</text>
</comment>
<comment type="subcellular location">
    <subcellularLocation>
        <location evidence="2">Preautophagosomal structure membrane</location>
        <topology evidence="2">Multi-pass membrane protein</topology>
    </subcellularLocation>
    <subcellularLocation>
        <location evidence="2">Cytoplasmic vesicle</location>
        <location evidence="2">Autophagosome membrane</location>
        <topology evidence="2">Multi-pass membrane protein</topology>
    </subcellularLocation>
    <subcellularLocation>
        <location evidence="2">Golgi apparatus</location>
        <location evidence="2">trans-Golgi network membrane</location>
        <topology evidence="2">Multi-pass membrane protein</topology>
    </subcellularLocation>
    <subcellularLocation>
        <location evidence="2">Late endosome membrane</location>
        <topology evidence="2">Multi-pass membrane protein</topology>
    </subcellularLocation>
    <subcellularLocation>
        <location evidence="2">Recycling endosome membrane</location>
        <topology evidence="2">Multi-pass membrane protein</topology>
    </subcellularLocation>
    <subcellularLocation>
        <location evidence="2">Endoplasmic reticulum membrane</location>
        <topology evidence="2">Multi-pass membrane protein</topology>
    </subcellularLocation>
    <subcellularLocation>
        <location evidence="2">Mitochondrion membrane</location>
        <topology evidence="3">Multi-pass membrane protein</topology>
    </subcellularLocation>
    <text evidence="2">Mainly localizes to the trans-Golgi network (TGN) and the endosomal system; cycles between them though vesicle trafficking. Export from the TGN to promote formation of autophagosomes is mediated by the AP-4 complex. Under amino acid starvation or rapamycin treatment, redistributes to preautophagosomal structure/phagophore assembly site (PAS). The starvation-induced redistribution depends on ULK1, ATG13, as well as SH3GLB1. Upon autophagy induction, a small portion transiently localizes to the autophagic membranes. Recruited to damaged mitochondria during mitophagy in a RIMOC1-dependent manner.</text>
</comment>
<comment type="domain">
    <text evidence="2">Forms a homotrimer with a solvated central pore, which is connected laterally to the cytosol through the cavity within each protomer. Acts as a lipid scramblase that uses its central pore to function: the central pore opens laterally to accommodate lipid headgroups, thereby enabling lipid flipping and redistribution of lipids added to the outer leaflet of ATG9A-containing vesicles, thereby enabling growth into autophagosomes.</text>
</comment>
<comment type="domain">
    <text evidence="2">The tyrosine-based sorting signal motif, also named YXX-psi motif, promotes interaction with the AP-4 complex.</text>
</comment>
<comment type="PTM">
    <text evidence="1">Ufmylated in a DDRGK1 dependent manner.</text>
</comment>
<comment type="similarity">
    <text evidence="6">Belongs to the ATG9 family.</text>
</comment>
<protein>
    <recommendedName>
        <fullName evidence="6">Autophagy-related protein 9A</fullName>
    </recommendedName>
    <alternativeName>
        <fullName evidence="2">APG9-like 1</fullName>
    </alternativeName>
    <alternativeName>
        <fullName evidence="5">Autophagy protein 9</fullName>
    </alternativeName>
</protein>
<dbReference type="EMBL" id="AM085499">
    <property type="protein sequence ID" value="CAJ30197.1"/>
    <property type="molecule type" value="mRNA"/>
</dbReference>
<dbReference type="EMBL" id="BC140511">
    <property type="protein sequence ID" value="AAI40512.1"/>
    <property type="molecule type" value="mRNA"/>
</dbReference>
<dbReference type="RefSeq" id="NP_001029878.1">
    <property type="nucleotide sequence ID" value="NM_001034706.2"/>
</dbReference>
<dbReference type="RefSeq" id="XP_005202921.1">
    <property type="nucleotide sequence ID" value="XM_005202864.4"/>
</dbReference>
<dbReference type="RefSeq" id="XP_005202922.1">
    <property type="nucleotide sequence ID" value="XM_005202865.5"/>
</dbReference>
<dbReference type="RefSeq" id="XP_005202923.1">
    <property type="nucleotide sequence ID" value="XM_005202866.4"/>
</dbReference>
<dbReference type="RefSeq" id="XP_010800666.1">
    <property type="nucleotide sequence ID" value="XM_010802364.4"/>
</dbReference>
<dbReference type="RefSeq" id="XP_010800667.1">
    <property type="nucleotide sequence ID" value="XM_010802365.3"/>
</dbReference>
<dbReference type="RefSeq" id="XP_010800668.1">
    <property type="nucleotide sequence ID" value="XM_010802366.4"/>
</dbReference>
<dbReference type="RefSeq" id="XP_015314720.1">
    <property type="nucleotide sequence ID" value="XM_015459234.2"/>
</dbReference>
<dbReference type="SMR" id="Q3T904"/>
<dbReference type="FunCoup" id="Q3T904">
    <property type="interactions" value="3436"/>
</dbReference>
<dbReference type="STRING" id="9913.ENSBTAP00000027461"/>
<dbReference type="GlyCosmos" id="Q3T904">
    <property type="glycosylation" value="1 site, No reported glycans"/>
</dbReference>
<dbReference type="GlyGen" id="Q3T904">
    <property type="glycosylation" value="1 site"/>
</dbReference>
<dbReference type="PaxDb" id="9913-ENSBTAP00000027461"/>
<dbReference type="GeneID" id="540482"/>
<dbReference type="KEGG" id="bta:540482"/>
<dbReference type="CTD" id="79065"/>
<dbReference type="VEuPathDB" id="HostDB:ENSBTAG00000020608"/>
<dbReference type="eggNOG" id="KOG2173">
    <property type="taxonomic scope" value="Eukaryota"/>
</dbReference>
<dbReference type="HOGENOM" id="CLU_006200_2_1_1"/>
<dbReference type="InParanoid" id="Q3T904"/>
<dbReference type="OMA" id="IPTGECV"/>
<dbReference type="OrthoDB" id="2020634at2759"/>
<dbReference type="TreeFam" id="TF313665"/>
<dbReference type="Reactome" id="R-BTA-1632852">
    <property type="pathway name" value="Macroautophagy"/>
</dbReference>
<dbReference type="Reactome" id="R-BTA-5205685">
    <property type="pathway name" value="PINK1-PRKN Mediated Mitophagy"/>
</dbReference>
<dbReference type="Proteomes" id="UP000009136">
    <property type="component" value="Chromosome 2"/>
</dbReference>
<dbReference type="Bgee" id="ENSBTAG00000020608">
    <property type="expression patterns" value="Expressed in choroid plexus and 101 other cell types or tissues"/>
</dbReference>
<dbReference type="GO" id="GO:0005776">
    <property type="term" value="C:autophagosome"/>
    <property type="evidence" value="ECO:0000318"/>
    <property type="project" value="GO_Central"/>
</dbReference>
<dbReference type="GO" id="GO:0000421">
    <property type="term" value="C:autophagosome membrane"/>
    <property type="evidence" value="ECO:0007669"/>
    <property type="project" value="UniProtKB-SubCell"/>
</dbReference>
<dbReference type="GO" id="GO:0005789">
    <property type="term" value="C:endoplasmic reticulum membrane"/>
    <property type="evidence" value="ECO:0000250"/>
    <property type="project" value="UniProtKB"/>
</dbReference>
<dbReference type="GO" id="GO:0005794">
    <property type="term" value="C:Golgi apparatus"/>
    <property type="evidence" value="ECO:0000250"/>
    <property type="project" value="UniProtKB"/>
</dbReference>
<dbReference type="GO" id="GO:0000139">
    <property type="term" value="C:Golgi membrane"/>
    <property type="evidence" value="ECO:0000250"/>
    <property type="project" value="UniProtKB"/>
</dbReference>
<dbReference type="GO" id="GO:0031902">
    <property type="term" value="C:late endosome membrane"/>
    <property type="evidence" value="ECO:0007669"/>
    <property type="project" value="UniProtKB-SubCell"/>
</dbReference>
<dbReference type="GO" id="GO:0031966">
    <property type="term" value="C:mitochondrial membrane"/>
    <property type="evidence" value="ECO:0007669"/>
    <property type="project" value="UniProtKB-SubCell"/>
</dbReference>
<dbReference type="GO" id="GO:0005739">
    <property type="term" value="C:mitochondrion"/>
    <property type="evidence" value="ECO:0000250"/>
    <property type="project" value="UniProtKB"/>
</dbReference>
<dbReference type="GO" id="GO:0000407">
    <property type="term" value="C:phagophore assembly site"/>
    <property type="evidence" value="ECO:0000318"/>
    <property type="project" value="GO_Central"/>
</dbReference>
<dbReference type="GO" id="GO:0034045">
    <property type="term" value="C:phagophore assembly site membrane"/>
    <property type="evidence" value="ECO:0007669"/>
    <property type="project" value="UniProtKB-SubCell"/>
</dbReference>
<dbReference type="GO" id="GO:0055038">
    <property type="term" value="C:recycling endosome membrane"/>
    <property type="evidence" value="ECO:0000250"/>
    <property type="project" value="UniProtKB"/>
</dbReference>
<dbReference type="GO" id="GO:0005802">
    <property type="term" value="C:trans-Golgi network"/>
    <property type="evidence" value="ECO:0000250"/>
    <property type="project" value="UniProtKB"/>
</dbReference>
<dbReference type="GO" id="GO:0017128">
    <property type="term" value="F:phospholipid scramblase activity"/>
    <property type="evidence" value="ECO:0000250"/>
    <property type="project" value="UniProtKB"/>
</dbReference>
<dbReference type="GO" id="GO:0000045">
    <property type="term" value="P:autophagosome assembly"/>
    <property type="evidence" value="ECO:0000250"/>
    <property type="project" value="UniProtKB"/>
</dbReference>
<dbReference type="GO" id="GO:0060349">
    <property type="term" value="P:bone morphogenesis"/>
    <property type="evidence" value="ECO:0000250"/>
    <property type="project" value="UniProtKB"/>
</dbReference>
<dbReference type="GO" id="GO:0000423">
    <property type="term" value="P:mitophagy"/>
    <property type="evidence" value="ECO:0000318"/>
    <property type="project" value="GO_Central"/>
</dbReference>
<dbReference type="GO" id="GO:0034727">
    <property type="term" value="P:piecemeal microautophagy of the nucleus"/>
    <property type="evidence" value="ECO:0000318"/>
    <property type="project" value="GO_Central"/>
</dbReference>
<dbReference type="GO" id="GO:0097300">
    <property type="term" value="P:programmed necrotic cell death"/>
    <property type="evidence" value="ECO:0000250"/>
    <property type="project" value="UniProtKB"/>
</dbReference>
<dbReference type="GO" id="GO:0034497">
    <property type="term" value="P:protein localization to phagophore assembly site"/>
    <property type="evidence" value="ECO:0000318"/>
    <property type="project" value="GO_Central"/>
</dbReference>
<dbReference type="GO" id="GO:0061709">
    <property type="term" value="P:reticulophagy"/>
    <property type="evidence" value="ECO:0000318"/>
    <property type="project" value="GO_Central"/>
</dbReference>
<dbReference type="InterPro" id="IPR007241">
    <property type="entry name" value="Autophagy-rel_prot_9"/>
</dbReference>
<dbReference type="PANTHER" id="PTHR13038">
    <property type="entry name" value="APG9 AUTOPHAGY 9"/>
    <property type="match status" value="1"/>
</dbReference>
<dbReference type="PANTHER" id="PTHR13038:SF13">
    <property type="entry name" value="AUTOPHAGY-RELATED PROTEIN 9A"/>
    <property type="match status" value="1"/>
</dbReference>
<dbReference type="Pfam" id="PF04109">
    <property type="entry name" value="ATG9"/>
    <property type="match status" value="1"/>
</dbReference>
<reference key="1">
    <citation type="submission" date="2005-09" db="EMBL/GenBank/DDBJ databases">
        <title>Phylogeny and biochemistry of the autophagy protein beclin 1.</title>
        <authorList>
            <person name="Botti J."/>
            <person name="Djavaheri-Mergny M."/>
            <person name="Codogno P."/>
            <person name="Oriol R."/>
        </authorList>
    </citation>
    <scope>NUCLEOTIDE SEQUENCE [MRNA]</scope>
</reference>
<reference key="2">
    <citation type="submission" date="2007-04" db="EMBL/GenBank/DDBJ databases">
        <authorList>
            <consortium name="NIH - Mammalian Gene Collection (MGC) project"/>
        </authorList>
    </citation>
    <scope>NUCLEOTIDE SEQUENCE [LARGE SCALE MRNA]</scope>
    <source>
        <strain>Hereford</strain>
        <tissue>Ascending colon</tissue>
    </source>
</reference>
<gene>
    <name evidence="2" type="primary">ATG9A</name>
    <name evidence="5" type="synonym">ATG9</name>
</gene>
<sequence length="839" mass="94440">MAQFDTEYQRLEASYSDSPPGEEDLLVHVPEGSKSPWHHIENLDLFFSRVYNLHQKNGFTCMLIGEIFELMQFLFVVAFTTFLVSCVDYDILFANKMVNHSLHPTEPVKVTLPDAFLPAQVCSARIQENGSLITILVIAGVFWVHRLIKFIYNICCYWEIHSFYLHALRIPMSALPYCTWQEVQARIVQTQKEHQICIHKRELTELDIYHRILRFQNYMVALVNKSLLPLRFRLPGLGEVVFFTRGLKYNFELILFWGPGSLFLNEWSLKAEYKRGGQRLELAQRLSNRILWIGIANFLLCPLILIWQILYAFFSYAEVLKREPGALGARCWSLYGRCYLRHFNELEHELQSRLNRGYKPASKYMNCFLSPLLTLLAKNCAFFAGSILAVLIALTIYDEDVLAVEHVLTTVTLLGVTVTVCRSFIPDQHMVFCPEQLLRVILAHIHYMPDHWQGNAHRSQTRDEFAQLFQYKAVFILEELLSPIVTPLILIFCLRPRALEIIDFFRNFTVEVVGVGDTCSFAQMDVRQHGHPQWLSGGQTEASVYQQAEDGKTELSLMHFAITNPGWQPPRESTAFLGFLKEQVQRDGAAAGLAQGGLLPENALFTSIQSLQSESEPLSLIANVVAGSSCRGPPLPRDLQGSRHRAEVASALRSFSPLQPGQAPTGRAPSTMTGSGVDARTASSGSSVWEGQLQSLVLSEYASTEMSLHALYMHQLHKQQAQAEPERHVWHRRESDESGESAPEEGGEGARATQPIPRSASYPCAAPRPGAPETTALQGGFQRRYGGITDPGTVPRAPSHFSRLPLGGWAEDGQSASRHPEPVPEEGSEDELPPQVHKV</sequence>
<organism>
    <name type="scientific">Bos taurus</name>
    <name type="common">Bovine</name>
    <dbReference type="NCBI Taxonomy" id="9913"/>
    <lineage>
        <taxon>Eukaryota</taxon>
        <taxon>Metazoa</taxon>
        <taxon>Chordata</taxon>
        <taxon>Craniata</taxon>
        <taxon>Vertebrata</taxon>
        <taxon>Euteleostomi</taxon>
        <taxon>Mammalia</taxon>
        <taxon>Eutheria</taxon>
        <taxon>Laurasiatheria</taxon>
        <taxon>Artiodactyla</taxon>
        <taxon>Ruminantia</taxon>
        <taxon>Pecora</taxon>
        <taxon>Bovidae</taxon>
        <taxon>Bovinae</taxon>
        <taxon>Bos</taxon>
    </lineage>
</organism>
<accession>Q3T904</accession>
<accession>A5D7D0</accession>
<proteinExistence type="evidence at transcript level"/>
<keyword id="KW-0007">Acetylation</keyword>
<keyword id="KW-0072">Autophagy</keyword>
<keyword id="KW-0968">Cytoplasmic vesicle</keyword>
<keyword id="KW-0256">Endoplasmic reticulum</keyword>
<keyword id="KW-0967">Endosome</keyword>
<keyword id="KW-0325">Glycoprotein</keyword>
<keyword id="KW-0333">Golgi apparatus</keyword>
<keyword id="KW-0445">Lipid transport</keyword>
<keyword id="KW-0472">Membrane</keyword>
<keyword id="KW-0496">Mitochondrion</keyword>
<keyword id="KW-0597">Phosphoprotein</keyword>
<keyword id="KW-1185">Reference proteome</keyword>
<keyword id="KW-0812">Transmembrane</keyword>
<keyword id="KW-1133">Transmembrane helix</keyword>
<keyword id="KW-0813">Transport</keyword>
<keyword id="KW-0832">Ubl conjugation</keyword>